<sequence length="344" mass="35887">MIVLGIESSCDETGVGVVKLDGEGNLEILADSVASSMQEHARFGGVVPEIASRAHLESMVPVMREALRQAGVDRPDAVAATVGPGLAGALLVGASAAKAYAAAWGVPFYAVNHLGGHVAVANLEGETLPHAVALLVSGGHTQLLEVDAVGLPMKELGSTLDDAAGEAYDKVSRLLGLGYPGGPIIDKLARRGNPEAIAFPRGLMKKSDSRHDFSFSGLKTSVARYVEAAERNGEVISVEDVCASFQEAVCDVLTFKAVRACRDVGAKVLLLGGGVAANSRLRELAQERCDKADIELRVPRFNLCTDNGVMIAALAAQRIHEGAQESPISVGTDPSLSVETPQVF</sequence>
<name>TSAD_CORGL</name>
<gene>
    <name evidence="1" type="primary">tsaD</name>
    <name type="synonym">gcp</name>
    <name type="ordered locus">Cgl0594</name>
    <name type="ordered locus">cg0687</name>
</gene>
<organism>
    <name type="scientific">Corynebacterium glutamicum (strain ATCC 13032 / DSM 20300 / JCM 1318 / BCRC 11384 / CCUG 27702 / LMG 3730 / NBRC 12168 / NCIMB 10025 / NRRL B-2784 / 534)</name>
    <dbReference type="NCBI Taxonomy" id="196627"/>
    <lineage>
        <taxon>Bacteria</taxon>
        <taxon>Bacillati</taxon>
        <taxon>Actinomycetota</taxon>
        <taxon>Actinomycetes</taxon>
        <taxon>Mycobacteriales</taxon>
        <taxon>Corynebacteriaceae</taxon>
        <taxon>Corynebacterium</taxon>
    </lineage>
</organism>
<reference key="1">
    <citation type="journal article" date="2003" name="Appl. Microbiol. Biotechnol.">
        <title>The Corynebacterium glutamicum genome: features and impacts on biotechnological processes.</title>
        <authorList>
            <person name="Ikeda M."/>
            <person name="Nakagawa S."/>
        </authorList>
    </citation>
    <scope>NUCLEOTIDE SEQUENCE [LARGE SCALE GENOMIC DNA]</scope>
    <source>
        <strain>ATCC 13032 / DSM 20300 / JCM 1318 / BCRC 11384 / CCUG 27702 / LMG 3730 / NBRC 12168 / NCIMB 10025 / NRRL B-2784 / 534</strain>
    </source>
</reference>
<reference key="2">
    <citation type="journal article" date="2003" name="J. Biotechnol.">
        <title>The complete Corynebacterium glutamicum ATCC 13032 genome sequence and its impact on the production of L-aspartate-derived amino acids and vitamins.</title>
        <authorList>
            <person name="Kalinowski J."/>
            <person name="Bathe B."/>
            <person name="Bartels D."/>
            <person name="Bischoff N."/>
            <person name="Bott M."/>
            <person name="Burkovski A."/>
            <person name="Dusch N."/>
            <person name="Eggeling L."/>
            <person name="Eikmanns B.J."/>
            <person name="Gaigalat L."/>
            <person name="Goesmann A."/>
            <person name="Hartmann M."/>
            <person name="Huthmacher K."/>
            <person name="Kraemer R."/>
            <person name="Linke B."/>
            <person name="McHardy A.C."/>
            <person name="Meyer F."/>
            <person name="Moeckel B."/>
            <person name="Pfefferle W."/>
            <person name="Puehler A."/>
            <person name="Rey D.A."/>
            <person name="Rueckert C."/>
            <person name="Rupp O."/>
            <person name="Sahm H."/>
            <person name="Wendisch V.F."/>
            <person name="Wiegraebe I."/>
            <person name="Tauch A."/>
        </authorList>
    </citation>
    <scope>NUCLEOTIDE SEQUENCE [LARGE SCALE GENOMIC DNA]</scope>
    <source>
        <strain>ATCC 13032 / DSM 20300 / JCM 1318 / BCRC 11384 / CCUG 27702 / LMG 3730 / NBRC 12168 / NCIMB 10025 / NRRL B-2784 / 534</strain>
    </source>
</reference>
<dbReference type="EC" id="2.3.1.234" evidence="1"/>
<dbReference type="EMBL" id="BA000036">
    <property type="protein sequence ID" value="BAB97987.1"/>
    <property type="molecule type" value="Genomic_DNA"/>
</dbReference>
<dbReference type="EMBL" id="BX927149">
    <property type="protein sequence ID" value="CAF19299.1"/>
    <property type="molecule type" value="Genomic_DNA"/>
</dbReference>
<dbReference type="RefSeq" id="NP_599830.1">
    <property type="nucleotide sequence ID" value="NC_003450.3"/>
</dbReference>
<dbReference type="RefSeq" id="WP_011013752.1">
    <property type="nucleotide sequence ID" value="NC_006958.1"/>
</dbReference>
<dbReference type="SMR" id="Q8NSS4"/>
<dbReference type="STRING" id="196627.cg0687"/>
<dbReference type="GeneID" id="1018598"/>
<dbReference type="KEGG" id="cgb:cg0687"/>
<dbReference type="KEGG" id="cgl:Cgl0594"/>
<dbReference type="PATRIC" id="fig|196627.13.peg.585"/>
<dbReference type="eggNOG" id="COG0533">
    <property type="taxonomic scope" value="Bacteria"/>
</dbReference>
<dbReference type="HOGENOM" id="CLU_023208_0_2_11"/>
<dbReference type="OrthoDB" id="9806197at2"/>
<dbReference type="BioCyc" id="CORYNE:G18NG-10156-MONOMER"/>
<dbReference type="Proteomes" id="UP000000582">
    <property type="component" value="Chromosome"/>
</dbReference>
<dbReference type="Proteomes" id="UP000001009">
    <property type="component" value="Chromosome"/>
</dbReference>
<dbReference type="GO" id="GO:0005737">
    <property type="term" value="C:cytoplasm"/>
    <property type="evidence" value="ECO:0007669"/>
    <property type="project" value="UniProtKB-SubCell"/>
</dbReference>
<dbReference type="GO" id="GO:0005506">
    <property type="term" value="F:iron ion binding"/>
    <property type="evidence" value="ECO:0007669"/>
    <property type="project" value="UniProtKB-UniRule"/>
</dbReference>
<dbReference type="GO" id="GO:0061711">
    <property type="term" value="F:N(6)-L-threonylcarbamoyladenine synthase activity"/>
    <property type="evidence" value="ECO:0007669"/>
    <property type="project" value="UniProtKB-EC"/>
</dbReference>
<dbReference type="GO" id="GO:0002949">
    <property type="term" value="P:tRNA threonylcarbamoyladenosine modification"/>
    <property type="evidence" value="ECO:0007669"/>
    <property type="project" value="UniProtKB-UniRule"/>
</dbReference>
<dbReference type="CDD" id="cd24133">
    <property type="entry name" value="ASKHA_NBD_TsaD_bac"/>
    <property type="match status" value="1"/>
</dbReference>
<dbReference type="FunFam" id="3.30.420.40:FF:000012">
    <property type="entry name" value="tRNA N6-adenosine threonylcarbamoyltransferase"/>
    <property type="match status" value="1"/>
</dbReference>
<dbReference type="FunFam" id="3.30.420.40:FF:000040">
    <property type="entry name" value="tRNA N6-adenosine threonylcarbamoyltransferase"/>
    <property type="match status" value="1"/>
</dbReference>
<dbReference type="Gene3D" id="3.30.420.40">
    <property type="match status" value="2"/>
</dbReference>
<dbReference type="HAMAP" id="MF_01445">
    <property type="entry name" value="TsaD"/>
    <property type="match status" value="1"/>
</dbReference>
<dbReference type="InterPro" id="IPR043129">
    <property type="entry name" value="ATPase_NBD"/>
</dbReference>
<dbReference type="InterPro" id="IPR000905">
    <property type="entry name" value="Gcp-like_dom"/>
</dbReference>
<dbReference type="InterPro" id="IPR017861">
    <property type="entry name" value="KAE1/TsaD"/>
</dbReference>
<dbReference type="InterPro" id="IPR017860">
    <property type="entry name" value="Peptidase_M22_CS"/>
</dbReference>
<dbReference type="InterPro" id="IPR022450">
    <property type="entry name" value="TsaD"/>
</dbReference>
<dbReference type="NCBIfam" id="TIGR00329">
    <property type="entry name" value="gcp_kae1"/>
    <property type="match status" value="1"/>
</dbReference>
<dbReference type="NCBIfam" id="TIGR03723">
    <property type="entry name" value="T6A_TsaD_YgjD"/>
    <property type="match status" value="1"/>
</dbReference>
<dbReference type="PANTHER" id="PTHR11735">
    <property type="entry name" value="TRNA N6-ADENOSINE THREONYLCARBAMOYLTRANSFERASE"/>
    <property type="match status" value="1"/>
</dbReference>
<dbReference type="PANTHER" id="PTHR11735:SF6">
    <property type="entry name" value="TRNA N6-ADENOSINE THREONYLCARBAMOYLTRANSFERASE, MITOCHONDRIAL"/>
    <property type="match status" value="1"/>
</dbReference>
<dbReference type="Pfam" id="PF00814">
    <property type="entry name" value="TsaD"/>
    <property type="match status" value="1"/>
</dbReference>
<dbReference type="PRINTS" id="PR00789">
    <property type="entry name" value="OSIALOPTASE"/>
</dbReference>
<dbReference type="SUPFAM" id="SSF53067">
    <property type="entry name" value="Actin-like ATPase domain"/>
    <property type="match status" value="1"/>
</dbReference>
<dbReference type="PROSITE" id="PS01016">
    <property type="entry name" value="GLYCOPROTEASE"/>
    <property type="match status" value="1"/>
</dbReference>
<protein>
    <recommendedName>
        <fullName evidence="1">tRNA N6-adenosine threonylcarbamoyltransferase</fullName>
        <ecNumber evidence="1">2.3.1.234</ecNumber>
    </recommendedName>
    <alternativeName>
        <fullName evidence="1">N6-L-threonylcarbamoyladenine synthase</fullName>
        <shortName evidence="1">t(6)A synthase</shortName>
    </alternativeName>
    <alternativeName>
        <fullName evidence="1">t(6)A37 threonylcarbamoyladenosine biosynthesis protein TsaD</fullName>
    </alternativeName>
    <alternativeName>
        <fullName evidence="1">tRNA threonylcarbamoyladenosine biosynthesis protein TsaD</fullName>
    </alternativeName>
</protein>
<proteinExistence type="inferred from homology"/>
<evidence type="ECO:0000255" key="1">
    <source>
        <dbReference type="HAMAP-Rule" id="MF_01445"/>
    </source>
</evidence>
<evidence type="ECO:0000256" key="2">
    <source>
        <dbReference type="SAM" id="MobiDB-lite"/>
    </source>
</evidence>
<feature type="chain" id="PRO_0000303338" description="tRNA N6-adenosine threonylcarbamoyltransferase">
    <location>
        <begin position="1"/>
        <end position="344"/>
    </location>
</feature>
<feature type="region of interest" description="Disordered" evidence="2">
    <location>
        <begin position="325"/>
        <end position="344"/>
    </location>
</feature>
<feature type="compositionally biased region" description="Polar residues" evidence="2">
    <location>
        <begin position="326"/>
        <end position="344"/>
    </location>
</feature>
<feature type="binding site" evidence="1">
    <location>
        <position position="113"/>
    </location>
    <ligand>
        <name>Fe cation</name>
        <dbReference type="ChEBI" id="CHEBI:24875"/>
    </ligand>
</feature>
<feature type="binding site" evidence="1">
    <location>
        <position position="117"/>
    </location>
    <ligand>
        <name>Fe cation</name>
        <dbReference type="ChEBI" id="CHEBI:24875"/>
    </ligand>
</feature>
<feature type="binding site" evidence="1">
    <location>
        <begin position="135"/>
        <end position="139"/>
    </location>
    <ligand>
        <name>substrate</name>
    </ligand>
</feature>
<feature type="binding site" evidence="1">
    <location>
        <position position="169"/>
    </location>
    <ligand>
        <name>substrate</name>
    </ligand>
</feature>
<feature type="binding site" evidence="1">
    <location>
        <position position="182"/>
    </location>
    <ligand>
        <name>substrate</name>
    </ligand>
</feature>
<feature type="binding site" evidence="1">
    <location>
        <position position="186"/>
    </location>
    <ligand>
        <name>substrate</name>
    </ligand>
</feature>
<feature type="binding site" evidence="1">
    <location>
        <position position="278"/>
    </location>
    <ligand>
        <name>substrate</name>
    </ligand>
</feature>
<feature type="binding site" evidence="1">
    <location>
        <position position="306"/>
    </location>
    <ligand>
        <name>Fe cation</name>
        <dbReference type="ChEBI" id="CHEBI:24875"/>
    </ligand>
</feature>
<accession>Q8NSS4</accession>
<accession>Q6M7G9</accession>
<keyword id="KW-0012">Acyltransferase</keyword>
<keyword id="KW-0963">Cytoplasm</keyword>
<keyword id="KW-0408">Iron</keyword>
<keyword id="KW-0479">Metal-binding</keyword>
<keyword id="KW-1185">Reference proteome</keyword>
<keyword id="KW-0808">Transferase</keyword>
<keyword id="KW-0819">tRNA processing</keyword>
<comment type="function">
    <text evidence="1">Required for the formation of a threonylcarbamoyl group on adenosine at position 37 (t(6)A37) in tRNAs that read codons beginning with adenine. Is involved in the transfer of the threonylcarbamoyl moiety of threonylcarbamoyl-AMP (TC-AMP) to the N6 group of A37, together with TsaE and TsaB. TsaD likely plays a direct catalytic role in this reaction.</text>
</comment>
<comment type="catalytic activity">
    <reaction evidence="1">
        <text>L-threonylcarbamoyladenylate + adenosine(37) in tRNA = N(6)-L-threonylcarbamoyladenosine(37) in tRNA + AMP + H(+)</text>
        <dbReference type="Rhea" id="RHEA:37059"/>
        <dbReference type="Rhea" id="RHEA-COMP:10162"/>
        <dbReference type="Rhea" id="RHEA-COMP:10163"/>
        <dbReference type="ChEBI" id="CHEBI:15378"/>
        <dbReference type="ChEBI" id="CHEBI:73682"/>
        <dbReference type="ChEBI" id="CHEBI:74411"/>
        <dbReference type="ChEBI" id="CHEBI:74418"/>
        <dbReference type="ChEBI" id="CHEBI:456215"/>
        <dbReference type="EC" id="2.3.1.234"/>
    </reaction>
</comment>
<comment type="cofactor">
    <cofactor evidence="1">
        <name>Fe(2+)</name>
        <dbReference type="ChEBI" id="CHEBI:29033"/>
    </cofactor>
    <text evidence="1">Binds 1 Fe(2+) ion per subunit.</text>
</comment>
<comment type="subcellular location">
    <subcellularLocation>
        <location evidence="1">Cytoplasm</location>
    </subcellularLocation>
</comment>
<comment type="similarity">
    <text evidence="1">Belongs to the KAE1 / TsaD family.</text>
</comment>